<comment type="function">
    <text evidence="1">One of several proteins that assist in the late maturation steps of the functional core of the 30S ribosomal subunit. Associates with free 30S ribosomal subunits (but not with 30S subunits that are part of 70S ribosomes or polysomes). Required for efficient processing of 16S rRNA. May interact with the 5'-terminal helix region of 16S rRNA.</text>
</comment>
<comment type="subunit">
    <text evidence="1">Monomer. Binds 30S ribosomal subunits, but not 50S ribosomal subunits or 70S ribosomes.</text>
</comment>
<comment type="subcellular location">
    <subcellularLocation>
        <location evidence="1">Cytoplasm</location>
    </subcellularLocation>
</comment>
<comment type="similarity">
    <text evidence="1">Belongs to the RbfA family.</text>
</comment>
<comment type="sequence caution" evidence="2">
    <conflict type="erroneous initiation">
        <sequence resource="EMBL-CDS" id="AAX72561"/>
    </conflict>
    <text>Extended N-terminus.</text>
</comment>
<dbReference type="EMBL" id="CP000056">
    <property type="protein sequence ID" value="AAX72561.1"/>
    <property type="status" value="ALT_INIT"/>
    <property type="molecule type" value="Genomic_DNA"/>
</dbReference>
<dbReference type="RefSeq" id="WP_012560889.1">
    <property type="nucleotide sequence ID" value="NC_007296.2"/>
</dbReference>
<dbReference type="SMR" id="Q48RU9"/>
<dbReference type="KEGG" id="spb:M28_Spy1451"/>
<dbReference type="HOGENOM" id="CLU_089475_3_0_9"/>
<dbReference type="GO" id="GO:0005829">
    <property type="term" value="C:cytosol"/>
    <property type="evidence" value="ECO:0007669"/>
    <property type="project" value="TreeGrafter"/>
</dbReference>
<dbReference type="GO" id="GO:0043024">
    <property type="term" value="F:ribosomal small subunit binding"/>
    <property type="evidence" value="ECO:0007669"/>
    <property type="project" value="TreeGrafter"/>
</dbReference>
<dbReference type="GO" id="GO:0030490">
    <property type="term" value="P:maturation of SSU-rRNA"/>
    <property type="evidence" value="ECO:0007669"/>
    <property type="project" value="UniProtKB-UniRule"/>
</dbReference>
<dbReference type="Gene3D" id="3.30.300.20">
    <property type="match status" value="1"/>
</dbReference>
<dbReference type="HAMAP" id="MF_00003">
    <property type="entry name" value="RbfA"/>
    <property type="match status" value="1"/>
</dbReference>
<dbReference type="InterPro" id="IPR015946">
    <property type="entry name" value="KH_dom-like_a/b"/>
</dbReference>
<dbReference type="InterPro" id="IPR000238">
    <property type="entry name" value="RbfA"/>
</dbReference>
<dbReference type="InterPro" id="IPR023799">
    <property type="entry name" value="RbfA_dom_sf"/>
</dbReference>
<dbReference type="InterPro" id="IPR020053">
    <property type="entry name" value="Ribosome-bd_factorA_CS"/>
</dbReference>
<dbReference type="NCBIfam" id="TIGR00082">
    <property type="entry name" value="rbfA"/>
    <property type="match status" value="1"/>
</dbReference>
<dbReference type="PANTHER" id="PTHR33515">
    <property type="entry name" value="RIBOSOME-BINDING FACTOR A, CHLOROPLASTIC-RELATED"/>
    <property type="match status" value="1"/>
</dbReference>
<dbReference type="PANTHER" id="PTHR33515:SF1">
    <property type="entry name" value="RIBOSOME-BINDING FACTOR A, CHLOROPLASTIC-RELATED"/>
    <property type="match status" value="1"/>
</dbReference>
<dbReference type="Pfam" id="PF02033">
    <property type="entry name" value="RBFA"/>
    <property type="match status" value="1"/>
</dbReference>
<dbReference type="SUPFAM" id="SSF89919">
    <property type="entry name" value="Ribosome-binding factor A, RbfA"/>
    <property type="match status" value="1"/>
</dbReference>
<dbReference type="PROSITE" id="PS01319">
    <property type="entry name" value="RBFA"/>
    <property type="match status" value="1"/>
</dbReference>
<gene>
    <name evidence="1" type="primary">rbfA</name>
    <name type="ordered locus">M28_Spy1451</name>
</gene>
<organism>
    <name type="scientific">Streptococcus pyogenes serotype M28 (strain MGAS6180)</name>
    <dbReference type="NCBI Taxonomy" id="319701"/>
    <lineage>
        <taxon>Bacteria</taxon>
        <taxon>Bacillati</taxon>
        <taxon>Bacillota</taxon>
        <taxon>Bacilli</taxon>
        <taxon>Lactobacillales</taxon>
        <taxon>Streptococcaceae</taxon>
        <taxon>Streptococcus</taxon>
    </lineage>
</organism>
<name>RBFA_STRPM</name>
<keyword id="KW-0963">Cytoplasm</keyword>
<keyword id="KW-0690">Ribosome biogenesis</keyword>
<sequence>MANHRIDRVGMEIKREVNDILQKKVRDPRVQGVTITEVQMQGDLSLAKVYYTIMSDLASDNQKAQTGLEKATGTIKRELGKQLTMYKIPDLVFEKDNSIAYGNKIDQLLRELDKKD</sequence>
<feature type="chain" id="PRO_0000321259" description="Ribosome-binding factor A">
    <location>
        <begin position="1"/>
        <end position="116"/>
    </location>
</feature>
<accession>Q48RU9</accession>
<proteinExistence type="inferred from homology"/>
<evidence type="ECO:0000255" key="1">
    <source>
        <dbReference type="HAMAP-Rule" id="MF_00003"/>
    </source>
</evidence>
<evidence type="ECO:0000305" key="2"/>
<reference key="1">
    <citation type="journal article" date="2005" name="J. Infect. Dis.">
        <title>Genome sequence of a serotype M28 strain of group A Streptococcus: potential new insights into puerperal sepsis and bacterial disease specificity.</title>
        <authorList>
            <person name="Green N.M."/>
            <person name="Zhang S."/>
            <person name="Porcella S.F."/>
            <person name="Nagiec M.J."/>
            <person name="Barbian K.D."/>
            <person name="Beres S.B."/>
            <person name="Lefebvre R.B."/>
            <person name="Musser J.M."/>
        </authorList>
    </citation>
    <scope>NUCLEOTIDE SEQUENCE [LARGE SCALE GENOMIC DNA]</scope>
    <source>
        <strain>MGAS6180</strain>
    </source>
</reference>
<protein>
    <recommendedName>
        <fullName evidence="1">Ribosome-binding factor A</fullName>
    </recommendedName>
</protein>